<accession>A0PMB7</accession>
<organism>
    <name type="scientific">Mycobacterium ulcerans (strain Agy99)</name>
    <dbReference type="NCBI Taxonomy" id="362242"/>
    <lineage>
        <taxon>Bacteria</taxon>
        <taxon>Bacillati</taxon>
        <taxon>Actinomycetota</taxon>
        <taxon>Actinomycetes</taxon>
        <taxon>Mycobacteriales</taxon>
        <taxon>Mycobacteriaceae</taxon>
        <taxon>Mycobacterium</taxon>
        <taxon>Mycobacterium ulcerans group</taxon>
    </lineage>
</organism>
<dbReference type="EC" id="2.7.7.6" evidence="1"/>
<dbReference type="EMBL" id="CP000325">
    <property type="protein sequence ID" value="ABL03486.1"/>
    <property type="molecule type" value="Genomic_DNA"/>
</dbReference>
<dbReference type="RefSeq" id="WP_011739109.1">
    <property type="nucleotide sequence ID" value="NC_008611.1"/>
</dbReference>
<dbReference type="SMR" id="A0PMB7"/>
<dbReference type="KEGG" id="mul:MUL_0848"/>
<dbReference type="eggNOG" id="COG0202">
    <property type="taxonomic scope" value="Bacteria"/>
</dbReference>
<dbReference type="HOGENOM" id="CLU_053084_0_1_11"/>
<dbReference type="Proteomes" id="UP000000765">
    <property type="component" value="Chromosome"/>
</dbReference>
<dbReference type="GO" id="GO:0005737">
    <property type="term" value="C:cytoplasm"/>
    <property type="evidence" value="ECO:0007669"/>
    <property type="project" value="UniProtKB-ARBA"/>
</dbReference>
<dbReference type="GO" id="GO:0000428">
    <property type="term" value="C:DNA-directed RNA polymerase complex"/>
    <property type="evidence" value="ECO:0007669"/>
    <property type="project" value="UniProtKB-KW"/>
</dbReference>
<dbReference type="GO" id="GO:0003677">
    <property type="term" value="F:DNA binding"/>
    <property type="evidence" value="ECO:0007669"/>
    <property type="project" value="UniProtKB-UniRule"/>
</dbReference>
<dbReference type="GO" id="GO:0003899">
    <property type="term" value="F:DNA-directed RNA polymerase activity"/>
    <property type="evidence" value="ECO:0007669"/>
    <property type="project" value="UniProtKB-UniRule"/>
</dbReference>
<dbReference type="GO" id="GO:0046983">
    <property type="term" value="F:protein dimerization activity"/>
    <property type="evidence" value="ECO:0007669"/>
    <property type="project" value="InterPro"/>
</dbReference>
<dbReference type="GO" id="GO:0006351">
    <property type="term" value="P:DNA-templated transcription"/>
    <property type="evidence" value="ECO:0007669"/>
    <property type="project" value="UniProtKB-UniRule"/>
</dbReference>
<dbReference type="CDD" id="cd06928">
    <property type="entry name" value="RNAP_alpha_NTD"/>
    <property type="match status" value="1"/>
</dbReference>
<dbReference type="FunFam" id="1.10.150.20:FF:000001">
    <property type="entry name" value="DNA-directed RNA polymerase subunit alpha"/>
    <property type="match status" value="1"/>
</dbReference>
<dbReference type="FunFam" id="2.170.120.12:FF:000001">
    <property type="entry name" value="DNA-directed RNA polymerase subunit alpha"/>
    <property type="match status" value="1"/>
</dbReference>
<dbReference type="Gene3D" id="1.10.150.20">
    <property type="entry name" value="5' to 3' exonuclease, C-terminal subdomain"/>
    <property type="match status" value="1"/>
</dbReference>
<dbReference type="Gene3D" id="2.170.120.12">
    <property type="entry name" value="DNA-directed RNA polymerase, insert domain"/>
    <property type="match status" value="1"/>
</dbReference>
<dbReference type="Gene3D" id="3.30.1360.10">
    <property type="entry name" value="RNA polymerase, RBP11-like subunit"/>
    <property type="match status" value="1"/>
</dbReference>
<dbReference type="HAMAP" id="MF_00059">
    <property type="entry name" value="RNApol_bact_RpoA"/>
    <property type="match status" value="1"/>
</dbReference>
<dbReference type="InterPro" id="IPR011262">
    <property type="entry name" value="DNA-dir_RNA_pol_insert"/>
</dbReference>
<dbReference type="InterPro" id="IPR011263">
    <property type="entry name" value="DNA-dir_RNA_pol_RpoA/D/Rpb3"/>
</dbReference>
<dbReference type="InterPro" id="IPR011773">
    <property type="entry name" value="DNA-dir_RpoA"/>
</dbReference>
<dbReference type="InterPro" id="IPR036603">
    <property type="entry name" value="RBP11-like"/>
</dbReference>
<dbReference type="InterPro" id="IPR011260">
    <property type="entry name" value="RNAP_asu_C"/>
</dbReference>
<dbReference type="InterPro" id="IPR036643">
    <property type="entry name" value="RNApol_insert_sf"/>
</dbReference>
<dbReference type="NCBIfam" id="NF003513">
    <property type="entry name" value="PRK05182.1-2"/>
    <property type="match status" value="1"/>
</dbReference>
<dbReference type="NCBIfam" id="NF003514">
    <property type="entry name" value="PRK05182.1-4"/>
    <property type="match status" value="1"/>
</dbReference>
<dbReference type="NCBIfam" id="NF003519">
    <property type="entry name" value="PRK05182.2-5"/>
    <property type="match status" value="1"/>
</dbReference>
<dbReference type="NCBIfam" id="TIGR02027">
    <property type="entry name" value="rpoA"/>
    <property type="match status" value="1"/>
</dbReference>
<dbReference type="Pfam" id="PF01000">
    <property type="entry name" value="RNA_pol_A_bac"/>
    <property type="match status" value="1"/>
</dbReference>
<dbReference type="Pfam" id="PF03118">
    <property type="entry name" value="RNA_pol_A_CTD"/>
    <property type="match status" value="1"/>
</dbReference>
<dbReference type="Pfam" id="PF01193">
    <property type="entry name" value="RNA_pol_L"/>
    <property type="match status" value="1"/>
</dbReference>
<dbReference type="SMART" id="SM00662">
    <property type="entry name" value="RPOLD"/>
    <property type="match status" value="1"/>
</dbReference>
<dbReference type="SUPFAM" id="SSF47789">
    <property type="entry name" value="C-terminal domain of RNA polymerase alpha subunit"/>
    <property type="match status" value="1"/>
</dbReference>
<dbReference type="SUPFAM" id="SSF56553">
    <property type="entry name" value="Insert subdomain of RNA polymerase alpha subunit"/>
    <property type="match status" value="1"/>
</dbReference>
<dbReference type="SUPFAM" id="SSF55257">
    <property type="entry name" value="RBP11-like subunits of RNA polymerase"/>
    <property type="match status" value="1"/>
</dbReference>
<feature type="chain" id="PRO_0000296838" description="DNA-directed RNA polymerase subunit alpha">
    <location>
        <begin position="1"/>
        <end position="347"/>
    </location>
</feature>
<feature type="region of interest" description="Alpha N-terminal domain (alpha-NTD)" evidence="1">
    <location>
        <begin position="1"/>
        <end position="226"/>
    </location>
</feature>
<feature type="region of interest" description="Alpha C-terminal domain (alpha-CTD)" evidence="1">
    <location>
        <begin position="241"/>
        <end position="347"/>
    </location>
</feature>
<evidence type="ECO:0000255" key="1">
    <source>
        <dbReference type="HAMAP-Rule" id="MF_00059"/>
    </source>
</evidence>
<comment type="function">
    <text evidence="1">DNA-dependent RNA polymerase catalyzes the transcription of DNA into RNA using the four ribonucleoside triphosphates as substrates.</text>
</comment>
<comment type="catalytic activity">
    <reaction evidence="1">
        <text>RNA(n) + a ribonucleoside 5'-triphosphate = RNA(n+1) + diphosphate</text>
        <dbReference type="Rhea" id="RHEA:21248"/>
        <dbReference type="Rhea" id="RHEA-COMP:14527"/>
        <dbReference type="Rhea" id="RHEA-COMP:17342"/>
        <dbReference type="ChEBI" id="CHEBI:33019"/>
        <dbReference type="ChEBI" id="CHEBI:61557"/>
        <dbReference type="ChEBI" id="CHEBI:140395"/>
        <dbReference type="EC" id="2.7.7.6"/>
    </reaction>
</comment>
<comment type="subunit">
    <text evidence="1">Homodimer. The RNAP catalytic core consists of 2 alpha, 1 beta, 1 beta' and 1 omega subunit. When a sigma factor is associated with the core the holoenzyme is formed, which can initiate transcription.</text>
</comment>
<comment type="domain">
    <text evidence="1">The N-terminal domain is essential for RNAP assembly and basal transcription, whereas the C-terminal domain is involved in interaction with transcriptional regulators and with upstream promoter elements.</text>
</comment>
<comment type="similarity">
    <text evidence="1">Belongs to the RNA polymerase alpha chain family.</text>
</comment>
<keyword id="KW-0240">DNA-directed RNA polymerase</keyword>
<keyword id="KW-0548">Nucleotidyltransferase</keyword>
<keyword id="KW-0804">Transcription</keyword>
<keyword id="KW-0808">Transferase</keyword>
<name>RPOA_MYCUA</name>
<protein>
    <recommendedName>
        <fullName evidence="1">DNA-directed RNA polymerase subunit alpha</fullName>
        <shortName evidence="1">RNAP subunit alpha</shortName>
        <ecNumber evidence="1">2.7.7.6</ecNumber>
    </recommendedName>
    <alternativeName>
        <fullName evidence="1">RNA polymerase subunit alpha</fullName>
    </alternativeName>
    <alternativeName>
        <fullName evidence="1">Transcriptase subunit alpha</fullName>
    </alternativeName>
</protein>
<sequence length="347" mass="37742">MLISQRPTLSEEVLTDSRSQFVIEPLEPGFGYTLGNSLRRTLLSSIPGAAVTSIRIDGVLHEFTTVPGVKEDVTDIILNLKALVVSSEEDEPVTMYLRKQGPGEVTAGDIVPPAGVTVHNPNMRIATLNDKGKLEVELVVERGRGYVPAVQNRASGAEIGRIPVDSIYSPVLKVTYKVDATRVEQRTDFDKLILDVETKNSITPRDALASAGKTLVELFGLARELNVEAEGIEIGPSPAEADHIASFALPIDDLDLTVRSYNCLKREGVHTVGELVSRTESDLLDIRNFGQKSIDEVKVKLHQLGLSLKDSPPSFDPSEVAGYDVATGTWSTEGAYDDQDYAETEQL</sequence>
<gene>
    <name evidence="1" type="primary">rpoA</name>
    <name type="ordered locus">MUL_0848</name>
</gene>
<proteinExistence type="inferred from homology"/>
<reference key="1">
    <citation type="journal article" date="2007" name="Genome Res.">
        <title>Reductive evolution and niche adaptation inferred from the genome of Mycobacterium ulcerans, the causative agent of Buruli ulcer.</title>
        <authorList>
            <person name="Stinear T.P."/>
            <person name="Seemann T."/>
            <person name="Pidot S."/>
            <person name="Frigui W."/>
            <person name="Reysset G."/>
            <person name="Garnier T."/>
            <person name="Meurice G."/>
            <person name="Simon D."/>
            <person name="Bouchier C."/>
            <person name="Ma L."/>
            <person name="Tichit M."/>
            <person name="Porter J.L."/>
            <person name="Ryan J."/>
            <person name="Johnson P.D.R."/>
            <person name="Davies J.K."/>
            <person name="Jenkin G.A."/>
            <person name="Small P.L.C."/>
            <person name="Jones L.M."/>
            <person name="Tekaia F."/>
            <person name="Laval F."/>
            <person name="Daffe M."/>
            <person name="Parkhill J."/>
            <person name="Cole S.T."/>
        </authorList>
    </citation>
    <scope>NUCLEOTIDE SEQUENCE [LARGE SCALE GENOMIC DNA]</scope>
    <source>
        <strain>Agy99</strain>
    </source>
</reference>